<comment type="function">
    <text evidence="1">Involved in the biosynthesis of ADP-glucose, a building block, required in the biosynthesis of maltose-1-phosphate (M1P) and in the elongation reactions to produce linear alpha-1,4-glucans. Catalyzes the reaction between ATP and alpha-D-glucose 1-phosphate (G1P) to produce pyrophosphate and ADP-Glc.</text>
</comment>
<comment type="catalytic activity">
    <reaction evidence="1">
        <text>alpha-D-glucose 1-phosphate + ATP + H(+) = ADP-alpha-D-glucose + diphosphate</text>
        <dbReference type="Rhea" id="RHEA:12120"/>
        <dbReference type="ChEBI" id="CHEBI:15378"/>
        <dbReference type="ChEBI" id="CHEBI:30616"/>
        <dbReference type="ChEBI" id="CHEBI:33019"/>
        <dbReference type="ChEBI" id="CHEBI:57498"/>
        <dbReference type="ChEBI" id="CHEBI:58601"/>
        <dbReference type="EC" id="2.7.7.27"/>
    </reaction>
</comment>
<comment type="pathway">
    <text evidence="2">Capsule biogenesis; capsule polysaccharide biosynthesis.</text>
</comment>
<comment type="pathway">
    <text evidence="1">Glycan biosynthesis; glycogen biosynthesis.</text>
</comment>
<comment type="similarity">
    <text evidence="1">Belongs to the bacterial/plant glucose-1-phosphate adenylyltransferase family.</text>
</comment>
<proteinExistence type="inferred from homology"/>
<name>GLGC_MYCLB</name>
<evidence type="ECO:0000255" key="1">
    <source>
        <dbReference type="HAMAP-Rule" id="MF_00624"/>
    </source>
</evidence>
<evidence type="ECO:0000305" key="2"/>
<sequence>MREVPQVLGIVLAGGEGKRLYPLTADRAKPAVPFGGAYRLVDFVLSNLVNARYLRICVLTQYKSHSLDRHISQNWRLSGLAGEYITPVPAQQRFGPHWYTGSADAIYQSLNLIYDEDPDYLVVFGADHVYRMDPEQMLRFHIGSGAGATVAGIRVPRSDATAFGCIDADDSGRIRRFTEKPLKPPGTPDDPDKTFVSMGNYIFTTKVLVDAIRADADDDHSYHDMGGDILPRLVDGGMAAVYDFSQNEVPGATDWDRAYWRDVGTLDAFYDAHMDLVSLRPVFNLYNKRWPIRGESENLAPAKFVNGGSVQESVVGAGSIISAASVRNSVLSSNVVVDNGAIVEGSVIMPGARVGRGAVIRHAILDKNVVVGPGEMVGVDPERDREHFAISAGGVVVVGKGVWI</sequence>
<accession>B8ZQY9</accession>
<keyword id="KW-0067">ATP-binding</keyword>
<keyword id="KW-0119">Carbohydrate metabolism</keyword>
<keyword id="KW-0320">Glycogen biosynthesis</keyword>
<keyword id="KW-0321">Glycogen metabolism</keyword>
<keyword id="KW-0547">Nucleotide-binding</keyword>
<keyword id="KW-0548">Nucleotidyltransferase</keyword>
<keyword id="KW-0808">Transferase</keyword>
<dbReference type="EC" id="2.7.7.27" evidence="1"/>
<dbReference type="EMBL" id="FM211192">
    <property type="protein sequence ID" value="CAR71164.1"/>
    <property type="molecule type" value="Genomic_DNA"/>
</dbReference>
<dbReference type="SMR" id="B8ZQY9"/>
<dbReference type="KEGG" id="mlb:MLBr01069"/>
<dbReference type="HOGENOM" id="CLU_029499_14_1_11"/>
<dbReference type="UniPathway" id="UPA00164"/>
<dbReference type="UniPathway" id="UPA00934"/>
<dbReference type="Proteomes" id="UP000006900">
    <property type="component" value="Chromosome"/>
</dbReference>
<dbReference type="GO" id="GO:0005524">
    <property type="term" value="F:ATP binding"/>
    <property type="evidence" value="ECO:0007669"/>
    <property type="project" value="UniProtKB-KW"/>
</dbReference>
<dbReference type="GO" id="GO:0008878">
    <property type="term" value="F:glucose-1-phosphate adenylyltransferase activity"/>
    <property type="evidence" value="ECO:0007669"/>
    <property type="project" value="UniProtKB-UniRule"/>
</dbReference>
<dbReference type="GO" id="GO:0045227">
    <property type="term" value="P:capsule polysaccharide biosynthetic process"/>
    <property type="evidence" value="ECO:0007669"/>
    <property type="project" value="UniProtKB-UniPathway"/>
</dbReference>
<dbReference type="GO" id="GO:0005978">
    <property type="term" value="P:glycogen biosynthetic process"/>
    <property type="evidence" value="ECO:0007669"/>
    <property type="project" value="UniProtKB-UniRule"/>
</dbReference>
<dbReference type="CDD" id="cd02508">
    <property type="entry name" value="ADP_Glucose_PP"/>
    <property type="match status" value="1"/>
</dbReference>
<dbReference type="CDD" id="cd04651">
    <property type="entry name" value="LbH_G1P_AT_C"/>
    <property type="match status" value="1"/>
</dbReference>
<dbReference type="FunFam" id="3.90.550.10:FF:000014">
    <property type="entry name" value="Glucose-1-phosphate adenylyltransferase"/>
    <property type="match status" value="1"/>
</dbReference>
<dbReference type="Gene3D" id="2.160.10.10">
    <property type="entry name" value="Hexapeptide repeat proteins"/>
    <property type="match status" value="1"/>
</dbReference>
<dbReference type="Gene3D" id="3.90.550.10">
    <property type="entry name" value="Spore Coat Polysaccharide Biosynthesis Protein SpsA, Chain A"/>
    <property type="match status" value="1"/>
</dbReference>
<dbReference type="HAMAP" id="MF_00624">
    <property type="entry name" value="GlgC"/>
    <property type="match status" value="1"/>
</dbReference>
<dbReference type="InterPro" id="IPR011831">
    <property type="entry name" value="ADP-Glc_PPase"/>
</dbReference>
<dbReference type="InterPro" id="IPR005836">
    <property type="entry name" value="ADP_Glu_pyroP_CS"/>
</dbReference>
<dbReference type="InterPro" id="IPR023049">
    <property type="entry name" value="GlgC_bac"/>
</dbReference>
<dbReference type="InterPro" id="IPR056818">
    <property type="entry name" value="GlmU/GlgC-like_hexapep"/>
</dbReference>
<dbReference type="InterPro" id="IPR005835">
    <property type="entry name" value="NTP_transferase_dom"/>
</dbReference>
<dbReference type="InterPro" id="IPR029044">
    <property type="entry name" value="Nucleotide-diphossugar_trans"/>
</dbReference>
<dbReference type="InterPro" id="IPR011004">
    <property type="entry name" value="Trimer_LpxA-like_sf"/>
</dbReference>
<dbReference type="NCBIfam" id="TIGR02091">
    <property type="entry name" value="glgC"/>
    <property type="match status" value="1"/>
</dbReference>
<dbReference type="NCBIfam" id="NF001947">
    <property type="entry name" value="PRK00725.1"/>
    <property type="match status" value="1"/>
</dbReference>
<dbReference type="NCBIfam" id="NF002023">
    <property type="entry name" value="PRK00844.1"/>
    <property type="match status" value="1"/>
</dbReference>
<dbReference type="PANTHER" id="PTHR43523:SF2">
    <property type="entry name" value="GLUCOSE-1-PHOSPHATE ADENYLYLTRANSFERASE"/>
    <property type="match status" value="1"/>
</dbReference>
<dbReference type="PANTHER" id="PTHR43523">
    <property type="entry name" value="GLUCOSE-1-PHOSPHATE ADENYLYLTRANSFERASE-RELATED"/>
    <property type="match status" value="1"/>
</dbReference>
<dbReference type="Pfam" id="PF24894">
    <property type="entry name" value="Hexapep_GlmU"/>
    <property type="match status" value="1"/>
</dbReference>
<dbReference type="Pfam" id="PF00483">
    <property type="entry name" value="NTP_transferase"/>
    <property type="match status" value="1"/>
</dbReference>
<dbReference type="SUPFAM" id="SSF53448">
    <property type="entry name" value="Nucleotide-diphospho-sugar transferases"/>
    <property type="match status" value="1"/>
</dbReference>
<dbReference type="SUPFAM" id="SSF51161">
    <property type="entry name" value="Trimeric LpxA-like enzymes"/>
    <property type="match status" value="1"/>
</dbReference>
<dbReference type="PROSITE" id="PS00808">
    <property type="entry name" value="ADP_GLC_PYROPHOSPH_1"/>
    <property type="match status" value="1"/>
</dbReference>
<dbReference type="PROSITE" id="PS00809">
    <property type="entry name" value="ADP_GLC_PYROPHOSPH_2"/>
    <property type="match status" value="1"/>
</dbReference>
<dbReference type="PROSITE" id="PS00810">
    <property type="entry name" value="ADP_GLC_PYROPHOSPH_3"/>
    <property type="match status" value="1"/>
</dbReference>
<gene>
    <name evidence="1" type="primary">glgC</name>
    <name type="ordered locus">MLBr01069</name>
</gene>
<feature type="chain" id="PRO_1000147230" description="Glucose-1-phosphate adenylyltransferase">
    <location>
        <begin position="1"/>
        <end position="404"/>
    </location>
</feature>
<feature type="binding site" evidence="1">
    <location>
        <position position="99"/>
    </location>
    <ligand>
        <name>alpha-D-glucose 1-phosphate</name>
        <dbReference type="ChEBI" id="CHEBI:58601"/>
    </ligand>
</feature>
<feature type="binding site" evidence="1">
    <location>
        <position position="164"/>
    </location>
    <ligand>
        <name>alpha-D-glucose 1-phosphate</name>
        <dbReference type="ChEBI" id="CHEBI:58601"/>
    </ligand>
</feature>
<feature type="binding site" evidence="1">
    <location>
        <begin position="179"/>
        <end position="180"/>
    </location>
    <ligand>
        <name>alpha-D-glucose 1-phosphate</name>
        <dbReference type="ChEBI" id="CHEBI:58601"/>
    </ligand>
</feature>
<feature type="binding site" evidence="1">
    <location>
        <position position="197"/>
    </location>
    <ligand>
        <name>alpha-D-glucose 1-phosphate</name>
        <dbReference type="ChEBI" id="CHEBI:58601"/>
    </ligand>
</feature>
<protein>
    <recommendedName>
        <fullName evidence="1">Glucose-1-phosphate adenylyltransferase</fullName>
        <ecNumber evidence="1">2.7.7.27</ecNumber>
    </recommendedName>
    <alternativeName>
        <fullName evidence="1">ADP-glucose pyrophosphorylase</fullName>
        <shortName evidence="1">ADPGlc PPase</shortName>
    </alternativeName>
    <alternativeName>
        <fullName evidence="1">ADP-glucose synthase</fullName>
    </alternativeName>
</protein>
<reference key="1">
    <citation type="journal article" date="2009" name="Nat. Genet.">
        <title>Comparative genomic and phylogeographic analysis of Mycobacterium leprae.</title>
        <authorList>
            <person name="Monot M."/>
            <person name="Honore N."/>
            <person name="Garnier T."/>
            <person name="Zidane N."/>
            <person name="Sherafi D."/>
            <person name="Paniz-Mondolfi A."/>
            <person name="Matsuoka M."/>
            <person name="Taylor G.M."/>
            <person name="Donoghue H.D."/>
            <person name="Bouwman A."/>
            <person name="Mays S."/>
            <person name="Watson C."/>
            <person name="Lockwood D."/>
            <person name="Khamispour A."/>
            <person name="Dowlati Y."/>
            <person name="Jianping S."/>
            <person name="Rea T.H."/>
            <person name="Vera-Cabrera L."/>
            <person name="Stefani M.M."/>
            <person name="Banu S."/>
            <person name="Macdonald M."/>
            <person name="Sapkota B.R."/>
            <person name="Spencer J.S."/>
            <person name="Thomas J."/>
            <person name="Harshman K."/>
            <person name="Singh P."/>
            <person name="Busso P."/>
            <person name="Gattiker A."/>
            <person name="Rougemont J."/>
            <person name="Brennan P.J."/>
            <person name="Cole S.T."/>
        </authorList>
    </citation>
    <scope>NUCLEOTIDE SEQUENCE [LARGE SCALE GENOMIC DNA]</scope>
    <source>
        <strain>Br4923</strain>
    </source>
</reference>
<organism>
    <name type="scientific">Mycobacterium leprae (strain Br4923)</name>
    <dbReference type="NCBI Taxonomy" id="561304"/>
    <lineage>
        <taxon>Bacteria</taxon>
        <taxon>Bacillati</taxon>
        <taxon>Actinomycetota</taxon>
        <taxon>Actinomycetes</taxon>
        <taxon>Mycobacteriales</taxon>
        <taxon>Mycobacteriaceae</taxon>
        <taxon>Mycobacterium</taxon>
    </lineage>
</organism>